<name>DUT_FRATW</name>
<sequence>MKVELKILNKELIKELPGYATEGSAAIDLRACISESIYLKSGECKLVATGIAINIANPNYAAMILPRSGLGHKKGLVLGNGTGLIDSDYQGELMVSCFNRSQETIEIEPLMRFAQLVIVPVVQANFEIVEDFSQQSVRATGGFGHTGV</sequence>
<keyword id="KW-0378">Hydrolase</keyword>
<keyword id="KW-0460">Magnesium</keyword>
<keyword id="KW-0479">Metal-binding</keyword>
<keyword id="KW-0546">Nucleotide metabolism</keyword>
<feature type="chain" id="PRO_1000015472" description="Deoxyuridine 5'-triphosphate nucleotidohydrolase">
    <location>
        <begin position="1"/>
        <end position="148"/>
    </location>
</feature>
<feature type="binding site" evidence="1">
    <location>
        <begin position="67"/>
        <end position="69"/>
    </location>
    <ligand>
        <name>substrate</name>
    </ligand>
</feature>
<feature type="binding site" evidence="1">
    <location>
        <position position="80"/>
    </location>
    <ligand>
        <name>substrate</name>
    </ligand>
</feature>
<feature type="binding site" evidence="1">
    <location>
        <begin position="84"/>
        <end position="86"/>
    </location>
    <ligand>
        <name>substrate</name>
    </ligand>
</feature>
<feature type="binding site" evidence="1">
    <location>
        <position position="94"/>
    </location>
    <ligand>
        <name>substrate</name>
    </ligand>
</feature>
<evidence type="ECO:0000255" key="1">
    <source>
        <dbReference type="HAMAP-Rule" id="MF_00116"/>
    </source>
</evidence>
<accession>A4IZU0</accession>
<dbReference type="EC" id="3.6.1.23" evidence="1"/>
<dbReference type="EMBL" id="CP000608">
    <property type="protein sequence ID" value="ABO47439.1"/>
    <property type="molecule type" value="Genomic_DNA"/>
</dbReference>
<dbReference type="RefSeq" id="WP_003017689.1">
    <property type="nucleotide sequence ID" value="NC_009257.1"/>
</dbReference>
<dbReference type="SMR" id="A4IZU0"/>
<dbReference type="KEGG" id="ftw:FTW_1763"/>
<dbReference type="HOGENOM" id="CLU_068508_1_1_6"/>
<dbReference type="UniPathway" id="UPA00610">
    <property type="reaction ID" value="UER00666"/>
</dbReference>
<dbReference type="GO" id="GO:0004170">
    <property type="term" value="F:dUTP diphosphatase activity"/>
    <property type="evidence" value="ECO:0007669"/>
    <property type="project" value="UniProtKB-UniRule"/>
</dbReference>
<dbReference type="GO" id="GO:0000287">
    <property type="term" value="F:magnesium ion binding"/>
    <property type="evidence" value="ECO:0007669"/>
    <property type="project" value="UniProtKB-UniRule"/>
</dbReference>
<dbReference type="GO" id="GO:0006226">
    <property type="term" value="P:dUMP biosynthetic process"/>
    <property type="evidence" value="ECO:0007669"/>
    <property type="project" value="UniProtKB-UniRule"/>
</dbReference>
<dbReference type="GO" id="GO:0046081">
    <property type="term" value="P:dUTP catabolic process"/>
    <property type="evidence" value="ECO:0007669"/>
    <property type="project" value="InterPro"/>
</dbReference>
<dbReference type="CDD" id="cd07557">
    <property type="entry name" value="trimeric_dUTPase"/>
    <property type="match status" value="1"/>
</dbReference>
<dbReference type="FunFam" id="2.70.40.10:FF:000002">
    <property type="entry name" value="dUTP diphosphatase"/>
    <property type="match status" value="1"/>
</dbReference>
<dbReference type="Gene3D" id="2.70.40.10">
    <property type="match status" value="1"/>
</dbReference>
<dbReference type="HAMAP" id="MF_00116">
    <property type="entry name" value="dUTPase_bact"/>
    <property type="match status" value="1"/>
</dbReference>
<dbReference type="InterPro" id="IPR008181">
    <property type="entry name" value="dUTPase"/>
</dbReference>
<dbReference type="InterPro" id="IPR029054">
    <property type="entry name" value="dUTPase-like"/>
</dbReference>
<dbReference type="InterPro" id="IPR036157">
    <property type="entry name" value="dUTPase-like_sf"/>
</dbReference>
<dbReference type="InterPro" id="IPR033704">
    <property type="entry name" value="dUTPase_trimeric"/>
</dbReference>
<dbReference type="NCBIfam" id="TIGR00576">
    <property type="entry name" value="dut"/>
    <property type="match status" value="1"/>
</dbReference>
<dbReference type="NCBIfam" id="NF001862">
    <property type="entry name" value="PRK00601.1"/>
    <property type="match status" value="1"/>
</dbReference>
<dbReference type="PANTHER" id="PTHR11241">
    <property type="entry name" value="DEOXYURIDINE 5'-TRIPHOSPHATE NUCLEOTIDOHYDROLASE"/>
    <property type="match status" value="1"/>
</dbReference>
<dbReference type="PANTHER" id="PTHR11241:SF0">
    <property type="entry name" value="DEOXYURIDINE 5'-TRIPHOSPHATE NUCLEOTIDOHYDROLASE"/>
    <property type="match status" value="1"/>
</dbReference>
<dbReference type="Pfam" id="PF00692">
    <property type="entry name" value="dUTPase"/>
    <property type="match status" value="1"/>
</dbReference>
<dbReference type="SUPFAM" id="SSF51283">
    <property type="entry name" value="dUTPase-like"/>
    <property type="match status" value="1"/>
</dbReference>
<protein>
    <recommendedName>
        <fullName evidence="1">Deoxyuridine 5'-triphosphate nucleotidohydrolase</fullName>
        <shortName evidence="1">dUTPase</shortName>
        <ecNumber evidence="1">3.6.1.23</ecNumber>
    </recommendedName>
    <alternativeName>
        <fullName evidence="1">dUTP pyrophosphatase</fullName>
    </alternativeName>
</protein>
<reference key="1">
    <citation type="journal article" date="2007" name="PLoS ONE">
        <title>Complete genomic characterization of a pathogenic A.II strain of Francisella tularensis subspecies tularensis.</title>
        <authorList>
            <person name="Beckstrom-Sternberg S.M."/>
            <person name="Auerbach R.K."/>
            <person name="Godbole S."/>
            <person name="Pearson J.V."/>
            <person name="Beckstrom-Sternberg J.S."/>
            <person name="Deng Z."/>
            <person name="Munk C."/>
            <person name="Kubota K."/>
            <person name="Zhou Y."/>
            <person name="Bruce D."/>
            <person name="Noronha J."/>
            <person name="Scheuermann R.H."/>
            <person name="Wang A."/>
            <person name="Wei X."/>
            <person name="Wang J."/>
            <person name="Hao J."/>
            <person name="Wagner D.M."/>
            <person name="Brettin T.S."/>
            <person name="Brown N."/>
            <person name="Gilna P."/>
            <person name="Keim P.S."/>
        </authorList>
    </citation>
    <scope>NUCLEOTIDE SEQUENCE [LARGE SCALE GENOMIC DNA]</scope>
    <source>
        <strain>WY96-3418</strain>
    </source>
</reference>
<comment type="function">
    <text evidence="1">This enzyme is involved in nucleotide metabolism: it produces dUMP, the immediate precursor of thymidine nucleotides and it decreases the intracellular concentration of dUTP so that uracil cannot be incorporated into DNA.</text>
</comment>
<comment type="catalytic activity">
    <reaction evidence="1">
        <text>dUTP + H2O = dUMP + diphosphate + H(+)</text>
        <dbReference type="Rhea" id="RHEA:10248"/>
        <dbReference type="ChEBI" id="CHEBI:15377"/>
        <dbReference type="ChEBI" id="CHEBI:15378"/>
        <dbReference type="ChEBI" id="CHEBI:33019"/>
        <dbReference type="ChEBI" id="CHEBI:61555"/>
        <dbReference type="ChEBI" id="CHEBI:246422"/>
        <dbReference type="EC" id="3.6.1.23"/>
    </reaction>
</comment>
<comment type="cofactor">
    <cofactor evidence="1">
        <name>Mg(2+)</name>
        <dbReference type="ChEBI" id="CHEBI:18420"/>
    </cofactor>
</comment>
<comment type="pathway">
    <text evidence="1">Pyrimidine metabolism; dUMP biosynthesis; dUMP from dCTP (dUTP route): step 2/2.</text>
</comment>
<comment type="similarity">
    <text evidence="1">Belongs to the dUTPase family.</text>
</comment>
<gene>
    <name evidence="1" type="primary">dut</name>
    <name type="ordered locus">FTW_1763</name>
</gene>
<organism>
    <name type="scientific">Francisella tularensis subsp. tularensis (strain WY96-3418)</name>
    <dbReference type="NCBI Taxonomy" id="418136"/>
    <lineage>
        <taxon>Bacteria</taxon>
        <taxon>Pseudomonadati</taxon>
        <taxon>Pseudomonadota</taxon>
        <taxon>Gammaproteobacteria</taxon>
        <taxon>Thiotrichales</taxon>
        <taxon>Francisellaceae</taxon>
        <taxon>Francisella</taxon>
    </lineage>
</organism>
<proteinExistence type="inferred from homology"/>